<gene>
    <name evidence="1" type="primary">leuS</name>
    <name type="ordered locus">SPCG_0265</name>
</gene>
<accession>B2ISI0</accession>
<organism>
    <name type="scientific">Streptococcus pneumoniae (strain CGSP14)</name>
    <dbReference type="NCBI Taxonomy" id="516950"/>
    <lineage>
        <taxon>Bacteria</taxon>
        <taxon>Bacillati</taxon>
        <taxon>Bacillota</taxon>
        <taxon>Bacilli</taxon>
        <taxon>Lactobacillales</taxon>
        <taxon>Streptococcaceae</taxon>
        <taxon>Streptococcus</taxon>
    </lineage>
</organism>
<reference key="1">
    <citation type="journal article" date="2009" name="BMC Genomics">
        <title>Genome evolution driven by host adaptations results in a more virulent and antimicrobial-resistant Streptococcus pneumoniae serotype 14.</title>
        <authorList>
            <person name="Ding F."/>
            <person name="Tang P."/>
            <person name="Hsu M.-H."/>
            <person name="Cui P."/>
            <person name="Hu S."/>
            <person name="Yu J."/>
            <person name="Chiu C.-H."/>
        </authorList>
    </citation>
    <scope>NUCLEOTIDE SEQUENCE [LARGE SCALE GENOMIC DNA]</scope>
    <source>
        <strain>CGSP14</strain>
    </source>
</reference>
<protein>
    <recommendedName>
        <fullName evidence="1">Leucine--tRNA ligase</fullName>
        <ecNumber evidence="1">6.1.1.4</ecNumber>
    </recommendedName>
    <alternativeName>
        <fullName evidence="1">Leucyl-tRNA synthetase</fullName>
        <shortName evidence="1">LeuRS</shortName>
    </alternativeName>
</protein>
<feature type="chain" id="PRO_1000091371" description="Leucine--tRNA ligase">
    <location>
        <begin position="1"/>
        <end position="833"/>
    </location>
</feature>
<feature type="short sequence motif" description="'HIGH' region">
    <location>
        <begin position="41"/>
        <end position="52"/>
    </location>
</feature>
<feature type="short sequence motif" description="'KMSKS' region">
    <location>
        <begin position="610"/>
        <end position="614"/>
    </location>
</feature>
<feature type="binding site" evidence="1">
    <location>
        <position position="613"/>
    </location>
    <ligand>
        <name>ATP</name>
        <dbReference type="ChEBI" id="CHEBI:30616"/>
    </ligand>
</feature>
<name>SYL_STRPS</name>
<comment type="catalytic activity">
    <reaction evidence="1">
        <text>tRNA(Leu) + L-leucine + ATP = L-leucyl-tRNA(Leu) + AMP + diphosphate</text>
        <dbReference type="Rhea" id="RHEA:11688"/>
        <dbReference type="Rhea" id="RHEA-COMP:9613"/>
        <dbReference type="Rhea" id="RHEA-COMP:9622"/>
        <dbReference type="ChEBI" id="CHEBI:30616"/>
        <dbReference type="ChEBI" id="CHEBI:33019"/>
        <dbReference type="ChEBI" id="CHEBI:57427"/>
        <dbReference type="ChEBI" id="CHEBI:78442"/>
        <dbReference type="ChEBI" id="CHEBI:78494"/>
        <dbReference type="ChEBI" id="CHEBI:456215"/>
        <dbReference type="EC" id="6.1.1.4"/>
    </reaction>
</comment>
<comment type="subcellular location">
    <subcellularLocation>
        <location evidence="1">Cytoplasm</location>
    </subcellularLocation>
</comment>
<comment type="similarity">
    <text evidence="1">Belongs to the class-I aminoacyl-tRNA synthetase family.</text>
</comment>
<dbReference type="EC" id="6.1.1.4" evidence="1"/>
<dbReference type="EMBL" id="CP001033">
    <property type="protein sequence ID" value="ACB89517.1"/>
    <property type="molecule type" value="Genomic_DNA"/>
</dbReference>
<dbReference type="RefSeq" id="WP_000011784.1">
    <property type="nucleotide sequence ID" value="NC_010582.1"/>
</dbReference>
<dbReference type="SMR" id="B2ISI0"/>
<dbReference type="KEGG" id="spw:SPCG_0265"/>
<dbReference type="HOGENOM" id="CLU_004427_0_0_9"/>
<dbReference type="GO" id="GO:0005829">
    <property type="term" value="C:cytosol"/>
    <property type="evidence" value="ECO:0007669"/>
    <property type="project" value="TreeGrafter"/>
</dbReference>
<dbReference type="GO" id="GO:0002161">
    <property type="term" value="F:aminoacyl-tRNA deacylase activity"/>
    <property type="evidence" value="ECO:0007669"/>
    <property type="project" value="InterPro"/>
</dbReference>
<dbReference type="GO" id="GO:0005524">
    <property type="term" value="F:ATP binding"/>
    <property type="evidence" value="ECO:0007669"/>
    <property type="project" value="UniProtKB-UniRule"/>
</dbReference>
<dbReference type="GO" id="GO:0004823">
    <property type="term" value="F:leucine-tRNA ligase activity"/>
    <property type="evidence" value="ECO:0007669"/>
    <property type="project" value="UniProtKB-UniRule"/>
</dbReference>
<dbReference type="GO" id="GO:0006429">
    <property type="term" value="P:leucyl-tRNA aminoacylation"/>
    <property type="evidence" value="ECO:0007669"/>
    <property type="project" value="UniProtKB-UniRule"/>
</dbReference>
<dbReference type="CDD" id="cd07958">
    <property type="entry name" value="Anticodon_Ia_Leu_BEm"/>
    <property type="match status" value="1"/>
</dbReference>
<dbReference type="CDD" id="cd00812">
    <property type="entry name" value="LeuRS_core"/>
    <property type="match status" value="1"/>
</dbReference>
<dbReference type="FunFam" id="1.10.730.10:FF:000012">
    <property type="entry name" value="Leucine--tRNA ligase"/>
    <property type="match status" value="1"/>
</dbReference>
<dbReference type="FunFam" id="3.40.50.620:FF:000056">
    <property type="entry name" value="Leucine--tRNA ligase"/>
    <property type="match status" value="1"/>
</dbReference>
<dbReference type="FunFam" id="3.40.50.620:FF:000077">
    <property type="entry name" value="Leucine--tRNA ligase"/>
    <property type="match status" value="1"/>
</dbReference>
<dbReference type="FunFam" id="1.10.730.10:FF:000011">
    <property type="entry name" value="Leucine--tRNA ligase chloroplastic/mitochondrial"/>
    <property type="match status" value="1"/>
</dbReference>
<dbReference type="Gene3D" id="3.40.50.620">
    <property type="entry name" value="HUPs"/>
    <property type="match status" value="2"/>
</dbReference>
<dbReference type="Gene3D" id="1.10.730.10">
    <property type="entry name" value="Isoleucyl-tRNA Synthetase, Domain 1"/>
    <property type="match status" value="1"/>
</dbReference>
<dbReference type="Gene3D" id="3.90.740.10">
    <property type="entry name" value="Valyl/Leucyl/Isoleucyl-tRNA synthetase, editing domain"/>
    <property type="match status" value="1"/>
</dbReference>
<dbReference type="HAMAP" id="MF_00049_B">
    <property type="entry name" value="Leu_tRNA_synth_B"/>
    <property type="match status" value="1"/>
</dbReference>
<dbReference type="InterPro" id="IPR001412">
    <property type="entry name" value="aa-tRNA-synth_I_CS"/>
</dbReference>
<dbReference type="InterPro" id="IPR002300">
    <property type="entry name" value="aa-tRNA-synth_Ia"/>
</dbReference>
<dbReference type="InterPro" id="IPR002302">
    <property type="entry name" value="Leu-tRNA-ligase"/>
</dbReference>
<dbReference type="InterPro" id="IPR025709">
    <property type="entry name" value="Leu_tRNA-synth_edit"/>
</dbReference>
<dbReference type="InterPro" id="IPR013155">
    <property type="entry name" value="M/V/L/I-tRNA-synth_anticd-bd"/>
</dbReference>
<dbReference type="InterPro" id="IPR015413">
    <property type="entry name" value="Methionyl/Leucyl_tRNA_Synth"/>
</dbReference>
<dbReference type="InterPro" id="IPR014729">
    <property type="entry name" value="Rossmann-like_a/b/a_fold"/>
</dbReference>
<dbReference type="InterPro" id="IPR009080">
    <property type="entry name" value="tRNAsynth_Ia_anticodon-bd"/>
</dbReference>
<dbReference type="InterPro" id="IPR009008">
    <property type="entry name" value="Val/Leu/Ile-tRNA-synth_edit"/>
</dbReference>
<dbReference type="NCBIfam" id="TIGR00396">
    <property type="entry name" value="leuS_bact"/>
    <property type="match status" value="1"/>
</dbReference>
<dbReference type="PANTHER" id="PTHR43740:SF2">
    <property type="entry name" value="LEUCINE--TRNA LIGASE, MITOCHONDRIAL"/>
    <property type="match status" value="1"/>
</dbReference>
<dbReference type="PANTHER" id="PTHR43740">
    <property type="entry name" value="LEUCYL-TRNA SYNTHETASE"/>
    <property type="match status" value="1"/>
</dbReference>
<dbReference type="Pfam" id="PF08264">
    <property type="entry name" value="Anticodon_1"/>
    <property type="match status" value="1"/>
</dbReference>
<dbReference type="Pfam" id="PF00133">
    <property type="entry name" value="tRNA-synt_1"/>
    <property type="match status" value="2"/>
</dbReference>
<dbReference type="Pfam" id="PF13603">
    <property type="entry name" value="tRNA-synt_1_2"/>
    <property type="match status" value="1"/>
</dbReference>
<dbReference type="Pfam" id="PF09334">
    <property type="entry name" value="tRNA-synt_1g"/>
    <property type="match status" value="1"/>
</dbReference>
<dbReference type="PRINTS" id="PR00985">
    <property type="entry name" value="TRNASYNTHLEU"/>
</dbReference>
<dbReference type="SUPFAM" id="SSF47323">
    <property type="entry name" value="Anticodon-binding domain of a subclass of class I aminoacyl-tRNA synthetases"/>
    <property type="match status" value="1"/>
</dbReference>
<dbReference type="SUPFAM" id="SSF52374">
    <property type="entry name" value="Nucleotidylyl transferase"/>
    <property type="match status" value="1"/>
</dbReference>
<dbReference type="SUPFAM" id="SSF50677">
    <property type="entry name" value="ValRS/IleRS/LeuRS editing domain"/>
    <property type="match status" value="1"/>
</dbReference>
<dbReference type="PROSITE" id="PS00178">
    <property type="entry name" value="AA_TRNA_LIGASE_I"/>
    <property type="match status" value="1"/>
</dbReference>
<proteinExistence type="inferred from homology"/>
<keyword id="KW-0030">Aminoacyl-tRNA synthetase</keyword>
<keyword id="KW-0067">ATP-binding</keyword>
<keyword id="KW-0963">Cytoplasm</keyword>
<keyword id="KW-0436">Ligase</keyword>
<keyword id="KW-0547">Nucleotide-binding</keyword>
<keyword id="KW-0648">Protein biosynthesis</keyword>
<evidence type="ECO:0000255" key="1">
    <source>
        <dbReference type="HAMAP-Rule" id="MF_00049"/>
    </source>
</evidence>
<sequence length="833" mass="94396">MSFYNHKEIEPKWQGYWAEHHTFKTGTDASKPKFYALDMFPYPSGAGLHVGHPEGYTATDILSRYKRAQGYNVLHPMGWDAFGLPAEQYAMDTGNDPAEFTSENIANFKRQINALGFSYDWDREVNTTDPNYYKWTQWIFTKLYEKGLAYEAEVPVNWVEELGTAIANEEVLPDGTSERGGYPVVRKPMRQWMLKITAYAERLLNDLDELDWSESIKDMQRNWIGKSTGANVTFKVKGTDKEFTVFTTRPDTLFGATFTVLAPEHELVDAITSSEQAEAVVDYKHQASLKSDLARTDLAKEKTGVWTGAYAINPVNGKEMPIWIADYVLASYGTGAVMAVPAHDQRDWEFAKQFDLPIVEVLEGGNVEEAAYTEDGLHVNSDFLDGLNKEDAIAKIVACLEEKGCGQEKVTYRLRDWLFSRQRYWGEPIPIIHWEDGTSTAVPETELPLVLPVTKDIRPSGTGESPLANLTDWLEVTREDGVKGRRETNTMPQWAGSSWYYLRYIDPHNTEKLADEDLLKQWLPVDIYVGGAEHAVLHLLYARFWHKFLYDLGVVPTKEPFQKLFNQGMILGTSYRDHRGALVATDKVEKRDGSFFHIETGEELEQAPAKMSKSLKNVVNPDDVVEQYGADTLRVYEMFMGPLDASIAWSEEGLEGSRKFLDRVYRLITSKEILAENNGALDKAYNETVKAVTEQIESLKFNTAIAQLMVFVNAANKEDKLYVDYAKGFIQLIAPFAPHLAEELWQTVAETDKSISYVAWPTWDESKLVEDEIEIVVQIKGKVRAKLMVAKDLSREELQEIALADEKVKAEIDGKEIVKVIAVPNKLVNIVVK</sequence>